<dbReference type="EMBL" id="CP000046">
    <property type="status" value="NOT_ANNOTATED_CDS"/>
    <property type="molecule type" value="Genomic_DNA"/>
</dbReference>
<dbReference type="RefSeq" id="WP_014373779.1">
    <property type="nucleotide sequence ID" value="NZ_JBGOFO010000010.1"/>
</dbReference>
<dbReference type="SMR" id="P0C808"/>
<dbReference type="Proteomes" id="UP000000530">
    <property type="component" value="Chromosome"/>
</dbReference>
<dbReference type="GO" id="GO:0031640">
    <property type="term" value="P:killing of cells of another organism"/>
    <property type="evidence" value="ECO:0007669"/>
    <property type="project" value="UniProtKB-KW"/>
</dbReference>
<dbReference type="InterPro" id="IPR031429">
    <property type="entry name" value="PSM_alpha"/>
</dbReference>
<dbReference type="InterPro" id="IPR053383">
    <property type="entry name" value="PSM_alpha_peptides"/>
</dbReference>
<dbReference type="NCBIfam" id="NF033426">
    <property type="entry name" value="PSM_alpha_3"/>
    <property type="match status" value="1"/>
</dbReference>
<dbReference type="Pfam" id="PF17063">
    <property type="entry name" value="PSMalpha"/>
    <property type="match status" value="1"/>
</dbReference>
<gene>
    <name type="primary">psmA3</name>
    <name type="ordered locus">SACOL0493.2</name>
</gene>
<reference key="1">
    <citation type="journal article" date="2005" name="J. Bacteriol.">
        <title>Insights on evolution of virulence and resistance from the complete genome analysis of an early methicillin-resistant Staphylococcus aureus strain and a biofilm-producing methicillin-resistant Staphylococcus epidermidis strain.</title>
        <authorList>
            <person name="Gill S.R."/>
            <person name="Fouts D.E."/>
            <person name="Archer G.L."/>
            <person name="Mongodin E.F."/>
            <person name="DeBoy R.T."/>
            <person name="Ravel J."/>
            <person name="Paulsen I.T."/>
            <person name="Kolonay J.F."/>
            <person name="Brinkac L.M."/>
            <person name="Beanan M.J."/>
            <person name="Dodson R.J."/>
            <person name="Daugherty S.C."/>
            <person name="Madupu R."/>
            <person name="Angiuoli S.V."/>
            <person name="Durkin A.S."/>
            <person name="Haft D.H."/>
            <person name="Vamathevan J.J."/>
            <person name="Khouri H."/>
            <person name="Utterback T.R."/>
            <person name="Lee C."/>
            <person name="Dimitrov G."/>
            <person name="Jiang L."/>
            <person name="Qin H."/>
            <person name="Weidman J."/>
            <person name="Tran K."/>
            <person name="Kang K.H."/>
            <person name="Hance I.R."/>
            <person name="Nelson K.E."/>
            <person name="Fraser C.M."/>
        </authorList>
    </citation>
    <scope>NUCLEOTIDE SEQUENCE [LARGE SCALE GENOMIC DNA]</scope>
    <source>
        <strain>COL</strain>
    </source>
</reference>
<keyword id="KW-0204">Cytolysis</keyword>
<keyword id="KW-0843">Virulence</keyword>
<accession>P0C808</accession>
<sequence>MEFVAKLFKFFKDLLGKFLGNN</sequence>
<feature type="peptide" id="PRO_0000345063" description="Phenol-soluble modulin alpha 3 peptide">
    <location>
        <begin position="1"/>
        <end position="22"/>
    </location>
</feature>
<organism>
    <name type="scientific">Staphylococcus aureus (strain COL)</name>
    <dbReference type="NCBI Taxonomy" id="93062"/>
    <lineage>
        <taxon>Bacteria</taxon>
        <taxon>Bacillati</taxon>
        <taxon>Bacillota</taxon>
        <taxon>Bacilli</taxon>
        <taxon>Bacillales</taxon>
        <taxon>Staphylococcaceae</taxon>
        <taxon>Staphylococcus</taxon>
    </lineage>
</organism>
<comment type="function">
    <text evidence="1">Peptide which can recruit, activate and subsequently lyse human neutrophils, thus eliminating the main cellular defense against infection.</text>
</comment>
<comment type="similarity">
    <text evidence="2">Belongs to the phenol-soluble modulin alpha peptides family.</text>
</comment>
<name>PSMA3_STAAC</name>
<protein>
    <recommendedName>
        <fullName>Phenol-soluble modulin alpha 3 peptide</fullName>
    </recommendedName>
</protein>
<proteinExistence type="inferred from homology"/>
<evidence type="ECO:0000250" key="1">
    <source>
        <dbReference type="UniProtKB" id="A9JX07"/>
    </source>
</evidence>
<evidence type="ECO:0000305" key="2"/>